<protein>
    <recommendedName>
        <fullName evidence="1">Ribonuclease P protein component</fullName>
        <shortName evidence="1">RNase P protein</shortName>
        <shortName evidence="1">RNaseP protein</shortName>
        <ecNumber evidence="1">3.1.26.5</ecNumber>
    </recommendedName>
    <alternativeName>
        <fullName evidence="1">Protein C5</fullName>
    </alternativeName>
</protein>
<evidence type="ECO:0000255" key="1">
    <source>
        <dbReference type="HAMAP-Rule" id="MF_00227"/>
    </source>
</evidence>
<proteinExistence type="inferred from homology"/>
<feature type="chain" id="PRO_0000198470" description="Ribonuclease P protein component">
    <location>
        <begin position="1"/>
        <end position="161"/>
    </location>
</feature>
<accession>Q9ZJH0</accession>
<organism>
    <name type="scientific">Helicobacter pylori (strain J99 / ATCC 700824)</name>
    <name type="common">Campylobacter pylori J99</name>
    <dbReference type="NCBI Taxonomy" id="85963"/>
    <lineage>
        <taxon>Bacteria</taxon>
        <taxon>Pseudomonadati</taxon>
        <taxon>Campylobacterota</taxon>
        <taxon>Epsilonproteobacteria</taxon>
        <taxon>Campylobacterales</taxon>
        <taxon>Helicobacteraceae</taxon>
        <taxon>Helicobacter</taxon>
    </lineage>
</organism>
<comment type="function">
    <text evidence="1">RNaseP catalyzes the removal of the 5'-leader sequence from pre-tRNA to produce the mature 5'-terminus. It can also cleave other RNA substrates such as 4.5S RNA. The protein component plays an auxiliary but essential role in vivo by binding to the 5'-leader sequence and broadening the substrate specificity of the ribozyme.</text>
</comment>
<comment type="catalytic activity">
    <reaction evidence="1">
        <text>Endonucleolytic cleavage of RNA, removing 5'-extranucleotides from tRNA precursor.</text>
        <dbReference type="EC" id="3.1.26.5"/>
    </reaction>
</comment>
<comment type="subunit">
    <text evidence="1">Consists of a catalytic RNA component (M1 or rnpB) and a protein subunit.</text>
</comment>
<comment type="similarity">
    <text evidence="1">Belongs to the RnpA family.</text>
</comment>
<dbReference type="EC" id="3.1.26.5" evidence="1"/>
<dbReference type="EMBL" id="AE001439">
    <property type="protein sequence ID" value="AAD06918.1"/>
    <property type="molecule type" value="Genomic_DNA"/>
</dbReference>
<dbReference type="PIR" id="C71818">
    <property type="entry name" value="C71818"/>
</dbReference>
<dbReference type="RefSeq" id="WP_001112500.1">
    <property type="nucleotide sequence ID" value="NZ_CP011330.1"/>
</dbReference>
<dbReference type="SMR" id="Q9ZJH0"/>
<dbReference type="KEGG" id="hpj:jhp_1341"/>
<dbReference type="PATRIC" id="fig|85963.30.peg.1212"/>
<dbReference type="eggNOG" id="COG0594">
    <property type="taxonomic scope" value="Bacteria"/>
</dbReference>
<dbReference type="Proteomes" id="UP000000804">
    <property type="component" value="Chromosome"/>
</dbReference>
<dbReference type="GO" id="GO:0030677">
    <property type="term" value="C:ribonuclease P complex"/>
    <property type="evidence" value="ECO:0007669"/>
    <property type="project" value="TreeGrafter"/>
</dbReference>
<dbReference type="GO" id="GO:0042781">
    <property type="term" value="F:3'-tRNA processing endoribonuclease activity"/>
    <property type="evidence" value="ECO:0007669"/>
    <property type="project" value="TreeGrafter"/>
</dbReference>
<dbReference type="GO" id="GO:0004526">
    <property type="term" value="F:ribonuclease P activity"/>
    <property type="evidence" value="ECO:0007669"/>
    <property type="project" value="UniProtKB-UniRule"/>
</dbReference>
<dbReference type="GO" id="GO:0000049">
    <property type="term" value="F:tRNA binding"/>
    <property type="evidence" value="ECO:0007669"/>
    <property type="project" value="UniProtKB-UniRule"/>
</dbReference>
<dbReference type="GO" id="GO:0001682">
    <property type="term" value="P:tRNA 5'-leader removal"/>
    <property type="evidence" value="ECO:0007669"/>
    <property type="project" value="UniProtKB-UniRule"/>
</dbReference>
<dbReference type="Gene3D" id="3.30.230.10">
    <property type="match status" value="1"/>
</dbReference>
<dbReference type="HAMAP" id="MF_00227">
    <property type="entry name" value="RNase_P"/>
    <property type="match status" value="1"/>
</dbReference>
<dbReference type="InterPro" id="IPR020568">
    <property type="entry name" value="Ribosomal_Su5_D2-typ_SF"/>
</dbReference>
<dbReference type="InterPro" id="IPR014721">
    <property type="entry name" value="Ribsml_uS5_D2-typ_fold_subgr"/>
</dbReference>
<dbReference type="InterPro" id="IPR000100">
    <property type="entry name" value="RNase_P"/>
</dbReference>
<dbReference type="InterPro" id="IPR020539">
    <property type="entry name" value="RNase_P_CS"/>
</dbReference>
<dbReference type="NCBIfam" id="TIGR00188">
    <property type="entry name" value="rnpA"/>
    <property type="match status" value="1"/>
</dbReference>
<dbReference type="PANTHER" id="PTHR33992">
    <property type="entry name" value="RIBONUCLEASE P PROTEIN COMPONENT"/>
    <property type="match status" value="1"/>
</dbReference>
<dbReference type="PANTHER" id="PTHR33992:SF1">
    <property type="entry name" value="RIBONUCLEASE P PROTEIN COMPONENT"/>
    <property type="match status" value="1"/>
</dbReference>
<dbReference type="Pfam" id="PF00825">
    <property type="entry name" value="Ribonuclease_P"/>
    <property type="match status" value="1"/>
</dbReference>
<dbReference type="SUPFAM" id="SSF54211">
    <property type="entry name" value="Ribosomal protein S5 domain 2-like"/>
    <property type="match status" value="1"/>
</dbReference>
<dbReference type="PROSITE" id="PS00648">
    <property type="entry name" value="RIBONUCLEASE_P"/>
    <property type="match status" value="1"/>
</dbReference>
<keyword id="KW-0255">Endonuclease</keyword>
<keyword id="KW-0378">Hydrolase</keyword>
<keyword id="KW-0540">Nuclease</keyword>
<keyword id="KW-0694">RNA-binding</keyword>
<keyword id="KW-0819">tRNA processing</keyword>
<sequence length="161" mass="18774">MPDELRAEKSFPSKPYDSLKNKSEFDRVYRKGFKKHNPFFSLFVLDLSKEPPKEKEGFKDPLSCRLKDRNTLCLLGLSVSKKVGNAVKRNLIKRRLRSLVTRHAALCQGFALVFVPRSDCYHLDFWALEKHFLEMLTSIKDYMNKALKDLKKGMTHTHAKQ</sequence>
<reference key="1">
    <citation type="journal article" date="1999" name="Nature">
        <title>Genomic sequence comparison of two unrelated isolates of the human gastric pathogen Helicobacter pylori.</title>
        <authorList>
            <person name="Alm R.A."/>
            <person name="Ling L.-S.L."/>
            <person name="Moir D.T."/>
            <person name="King B.L."/>
            <person name="Brown E.D."/>
            <person name="Doig P.C."/>
            <person name="Smith D.R."/>
            <person name="Noonan B."/>
            <person name="Guild B.C."/>
            <person name="deJonge B.L."/>
            <person name="Carmel G."/>
            <person name="Tummino P.J."/>
            <person name="Caruso A."/>
            <person name="Uria-Nickelsen M."/>
            <person name="Mills D.M."/>
            <person name="Ives C."/>
            <person name="Gibson R."/>
            <person name="Merberg D."/>
            <person name="Mills S.D."/>
            <person name="Jiang Q."/>
            <person name="Taylor D.E."/>
            <person name="Vovis G.F."/>
            <person name="Trust T.J."/>
        </authorList>
    </citation>
    <scope>NUCLEOTIDE SEQUENCE [LARGE SCALE GENOMIC DNA]</scope>
    <source>
        <strain>J99 / ATCC 700824</strain>
    </source>
</reference>
<name>RNPA_HELPJ</name>
<gene>
    <name evidence="1" type="primary">rnpA</name>
    <name type="ordered locus">jhp_1341</name>
</gene>